<evidence type="ECO:0000255" key="1">
    <source>
        <dbReference type="HAMAP-Rule" id="MF_00333"/>
    </source>
</evidence>
<reference key="1">
    <citation type="journal article" date="2009" name="PLoS Pathog.">
        <title>Molecular evolutionary consequences of niche restriction in Francisella tularensis, a facultative intracellular pathogen.</title>
        <authorList>
            <person name="Larsson P."/>
            <person name="Elfsmark D."/>
            <person name="Svensson K."/>
            <person name="Wikstroem P."/>
            <person name="Forsman M."/>
            <person name="Brettin T."/>
            <person name="Keim P."/>
            <person name="Johansson A."/>
        </authorList>
    </citation>
    <scope>NUCLEOTIDE SEQUENCE [LARGE SCALE GENOMIC DNA]</scope>
    <source>
        <strain>FSC147</strain>
    </source>
</reference>
<proteinExistence type="inferred from homology"/>
<gene>
    <name evidence="1" type="primary">hemF</name>
    <name type="ordered locus">FTM_0889</name>
</gene>
<keyword id="KW-0963">Cytoplasm</keyword>
<keyword id="KW-0350">Heme biosynthesis</keyword>
<keyword id="KW-0479">Metal-binding</keyword>
<keyword id="KW-0560">Oxidoreductase</keyword>
<keyword id="KW-0627">Porphyrin biosynthesis</keyword>
<comment type="function">
    <text evidence="1">Involved in the heme biosynthesis. Catalyzes the aerobic oxidative decarboxylation of propionate groups of rings A and B of coproporphyrinogen-III to yield the vinyl groups in protoporphyrinogen-IX.</text>
</comment>
<comment type="catalytic activity">
    <reaction evidence="1">
        <text>coproporphyrinogen III + O2 + 2 H(+) = protoporphyrinogen IX + 2 CO2 + 2 H2O</text>
        <dbReference type="Rhea" id="RHEA:18257"/>
        <dbReference type="ChEBI" id="CHEBI:15377"/>
        <dbReference type="ChEBI" id="CHEBI:15378"/>
        <dbReference type="ChEBI" id="CHEBI:15379"/>
        <dbReference type="ChEBI" id="CHEBI:16526"/>
        <dbReference type="ChEBI" id="CHEBI:57307"/>
        <dbReference type="ChEBI" id="CHEBI:57309"/>
        <dbReference type="EC" id="1.3.3.3"/>
    </reaction>
</comment>
<comment type="cofactor">
    <cofactor evidence="1">
        <name>a divalent metal cation</name>
        <dbReference type="ChEBI" id="CHEBI:60240"/>
    </cofactor>
</comment>
<comment type="pathway">
    <text evidence="1">Porphyrin-containing compound metabolism; protoporphyrin-IX biosynthesis; protoporphyrinogen-IX from coproporphyrinogen-III (O2 route): step 1/1.</text>
</comment>
<comment type="subunit">
    <text evidence="1">Homodimer.</text>
</comment>
<comment type="subcellular location">
    <subcellularLocation>
        <location evidence="1">Cytoplasm</location>
    </subcellularLocation>
</comment>
<comment type="similarity">
    <text evidence="1">Belongs to the aerobic coproporphyrinogen-III oxidase family.</text>
</comment>
<dbReference type="EC" id="1.3.3.3" evidence="1"/>
<dbReference type="EMBL" id="CP000915">
    <property type="protein sequence ID" value="ACD30828.1"/>
    <property type="molecule type" value="Genomic_DNA"/>
</dbReference>
<dbReference type="SMR" id="B2SGG9"/>
<dbReference type="KEGG" id="ftm:FTM_0889"/>
<dbReference type="HOGENOM" id="CLU_026169_0_1_6"/>
<dbReference type="UniPathway" id="UPA00251">
    <property type="reaction ID" value="UER00322"/>
</dbReference>
<dbReference type="GO" id="GO:0005737">
    <property type="term" value="C:cytoplasm"/>
    <property type="evidence" value="ECO:0007669"/>
    <property type="project" value="UniProtKB-SubCell"/>
</dbReference>
<dbReference type="GO" id="GO:0004109">
    <property type="term" value="F:coproporphyrinogen oxidase activity"/>
    <property type="evidence" value="ECO:0007669"/>
    <property type="project" value="UniProtKB-UniRule"/>
</dbReference>
<dbReference type="GO" id="GO:0046872">
    <property type="term" value="F:metal ion binding"/>
    <property type="evidence" value="ECO:0007669"/>
    <property type="project" value="UniProtKB-KW"/>
</dbReference>
<dbReference type="GO" id="GO:0042803">
    <property type="term" value="F:protein homodimerization activity"/>
    <property type="evidence" value="ECO:0000250"/>
    <property type="project" value="UniProtKB"/>
</dbReference>
<dbReference type="GO" id="GO:0006782">
    <property type="term" value="P:protoporphyrinogen IX biosynthetic process"/>
    <property type="evidence" value="ECO:0007669"/>
    <property type="project" value="UniProtKB-UniRule"/>
</dbReference>
<dbReference type="FunFam" id="3.40.1500.10:FF:000010">
    <property type="entry name" value="Oxygen-dependent coproporphyrinogen-III oxidase"/>
    <property type="match status" value="1"/>
</dbReference>
<dbReference type="Gene3D" id="3.40.1500.10">
    <property type="entry name" value="Coproporphyrinogen III oxidase, aerobic"/>
    <property type="match status" value="1"/>
</dbReference>
<dbReference type="HAMAP" id="MF_00333">
    <property type="entry name" value="Coprogen_oxidas"/>
    <property type="match status" value="1"/>
</dbReference>
<dbReference type="InterPro" id="IPR001260">
    <property type="entry name" value="Coprogen_oxidase_aer"/>
</dbReference>
<dbReference type="InterPro" id="IPR036406">
    <property type="entry name" value="Coprogen_oxidase_aer_sf"/>
</dbReference>
<dbReference type="InterPro" id="IPR018375">
    <property type="entry name" value="Coprogen_oxidase_CS"/>
</dbReference>
<dbReference type="NCBIfam" id="NF003727">
    <property type="entry name" value="PRK05330.1"/>
    <property type="match status" value="1"/>
</dbReference>
<dbReference type="PANTHER" id="PTHR10755">
    <property type="entry name" value="COPROPORPHYRINOGEN III OXIDASE, MITOCHONDRIAL"/>
    <property type="match status" value="1"/>
</dbReference>
<dbReference type="PANTHER" id="PTHR10755:SF0">
    <property type="entry name" value="OXYGEN-DEPENDENT COPROPORPHYRINOGEN-III OXIDASE, MITOCHONDRIAL"/>
    <property type="match status" value="1"/>
</dbReference>
<dbReference type="Pfam" id="PF01218">
    <property type="entry name" value="Coprogen_oxidas"/>
    <property type="match status" value="1"/>
</dbReference>
<dbReference type="PIRSF" id="PIRSF000166">
    <property type="entry name" value="Coproporphyri_ox"/>
    <property type="match status" value="1"/>
</dbReference>
<dbReference type="PRINTS" id="PR00073">
    <property type="entry name" value="COPRGNOXDASE"/>
</dbReference>
<dbReference type="SUPFAM" id="SSF102886">
    <property type="entry name" value="Coproporphyrinogen III oxidase"/>
    <property type="match status" value="1"/>
</dbReference>
<dbReference type="PROSITE" id="PS01021">
    <property type="entry name" value="COPROGEN_OXIDASE"/>
    <property type="match status" value="1"/>
</dbReference>
<organism>
    <name type="scientific">Francisella tularensis subsp. mediasiatica (strain FSC147)</name>
    <dbReference type="NCBI Taxonomy" id="441952"/>
    <lineage>
        <taxon>Bacteria</taxon>
        <taxon>Pseudomonadati</taxon>
        <taxon>Pseudomonadota</taxon>
        <taxon>Gammaproteobacteria</taxon>
        <taxon>Thiotrichales</taxon>
        <taxon>Francisellaceae</taxon>
        <taxon>Francisella</taxon>
    </lineage>
</organism>
<protein>
    <recommendedName>
        <fullName evidence="1">Oxygen-dependent coproporphyrinogen-III oxidase</fullName>
        <shortName evidence="1">CPO</shortName>
        <shortName evidence="1">Coprogen oxidase</shortName>
        <shortName evidence="1">Coproporphyrinogenase</shortName>
        <ecNumber evidence="1">1.3.3.3</ecNumber>
    </recommendedName>
</protein>
<feature type="chain" id="PRO_1000133184" description="Oxygen-dependent coproporphyrinogen-III oxidase">
    <location>
        <begin position="1"/>
        <end position="308"/>
    </location>
</feature>
<feature type="region of interest" description="Important for dimerization" evidence="1">
    <location>
        <begin position="248"/>
        <end position="283"/>
    </location>
</feature>
<feature type="active site" description="Proton donor" evidence="1">
    <location>
        <position position="114"/>
    </location>
</feature>
<feature type="binding site" evidence="1">
    <location>
        <position position="100"/>
    </location>
    <ligand>
        <name>substrate</name>
    </ligand>
</feature>
<feature type="binding site" evidence="1">
    <location>
        <position position="104"/>
    </location>
    <ligand>
        <name>a divalent metal cation</name>
        <dbReference type="ChEBI" id="CHEBI:60240"/>
    </ligand>
</feature>
<feature type="binding site" evidence="1">
    <location>
        <position position="114"/>
    </location>
    <ligand>
        <name>a divalent metal cation</name>
        <dbReference type="ChEBI" id="CHEBI:60240"/>
    </ligand>
</feature>
<feature type="binding site" evidence="1">
    <location>
        <begin position="116"/>
        <end position="118"/>
    </location>
    <ligand>
        <name>substrate</name>
    </ligand>
</feature>
<feature type="binding site" evidence="1">
    <location>
        <position position="153"/>
    </location>
    <ligand>
        <name>a divalent metal cation</name>
        <dbReference type="ChEBI" id="CHEBI:60240"/>
    </ligand>
</feature>
<feature type="binding site" evidence="1">
    <location>
        <position position="183"/>
    </location>
    <ligand>
        <name>a divalent metal cation</name>
        <dbReference type="ChEBI" id="CHEBI:60240"/>
    </ligand>
</feature>
<feature type="binding site" evidence="1">
    <location>
        <begin position="266"/>
        <end position="268"/>
    </location>
    <ligand>
        <name>substrate</name>
    </ligand>
</feature>
<feature type="site" description="Important for dimerization" evidence="1">
    <location>
        <position position="183"/>
    </location>
</feature>
<accession>B2SGG9</accession>
<name>HEM6_FRATM</name>
<sequence length="308" mass="35918">MQEKISKFEDFLTQLQQNITTVLEQHETNAAKFISDKWQKPDTPDQKLKGYGNSMIIEGGEIFEKGVVAFSRVHGSELPPSATAKRQELAGKSFIATGLSLVIHPRNPFVPTSHANFRIFIADADTDNPIWWFGGGFDLTPYYPFEEDAIHWHQTAKNICDKHDKTYYPKFKKWCDEYFYLKHRDECRGVGGLFFDDLNDKSFDECFNFVTDCANSYLDAYIPIVAQRKNIEYSQKHKDFQLYRRGRYVEFNLVFDRGTIFGLQSGGRTESILSSMPPMATWKYNWQPELGSEEEKVYQYIKPRDWIK</sequence>